<accession>A4XBP3</accession>
<reference key="1">
    <citation type="journal article" date="2007" name="Proc. Natl. Acad. Sci. U.S.A.">
        <title>Genome sequencing reveals complex secondary metabolome in the marine actinomycete Salinispora tropica.</title>
        <authorList>
            <person name="Udwary D.W."/>
            <person name="Zeigler L."/>
            <person name="Asolkar R.N."/>
            <person name="Singan V."/>
            <person name="Lapidus A."/>
            <person name="Fenical W."/>
            <person name="Jensen P.R."/>
            <person name="Moore B.S."/>
        </authorList>
    </citation>
    <scope>NUCLEOTIDE SEQUENCE [LARGE SCALE GENOMIC DNA]</scope>
    <source>
        <strain>ATCC BAA-916 / DSM 44818 / JCM 13857 / NBRC 105044 / CNB-440</strain>
    </source>
</reference>
<proteinExistence type="inferred from homology"/>
<dbReference type="EMBL" id="CP000667">
    <property type="protein sequence ID" value="ABP56350.1"/>
    <property type="molecule type" value="Genomic_DNA"/>
</dbReference>
<dbReference type="RefSeq" id="WP_012015122.1">
    <property type="nucleotide sequence ID" value="NC_009380.1"/>
</dbReference>
<dbReference type="SMR" id="A4XBP3"/>
<dbReference type="STRING" id="369723.Strop_3920"/>
<dbReference type="KEGG" id="stp:Strop_3920"/>
<dbReference type="PATRIC" id="fig|369723.5.peg.4046"/>
<dbReference type="eggNOG" id="COG0090">
    <property type="taxonomic scope" value="Bacteria"/>
</dbReference>
<dbReference type="HOGENOM" id="CLU_036235_2_1_11"/>
<dbReference type="Proteomes" id="UP000000235">
    <property type="component" value="Chromosome"/>
</dbReference>
<dbReference type="GO" id="GO:0015934">
    <property type="term" value="C:large ribosomal subunit"/>
    <property type="evidence" value="ECO:0007669"/>
    <property type="project" value="InterPro"/>
</dbReference>
<dbReference type="GO" id="GO:0019843">
    <property type="term" value="F:rRNA binding"/>
    <property type="evidence" value="ECO:0007669"/>
    <property type="project" value="UniProtKB-UniRule"/>
</dbReference>
<dbReference type="GO" id="GO:0003735">
    <property type="term" value="F:structural constituent of ribosome"/>
    <property type="evidence" value="ECO:0007669"/>
    <property type="project" value="InterPro"/>
</dbReference>
<dbReference type="GO" id="GO:0016740">
    <property type="term" value="F:transferase activity"/>
    <property type="evidence" value="ECO:0007669"/>
    <property type="project" value="InterPro"/>
</dbReference>
<dbReference type="GO" id="GO:0002181">
    <property type="term" value="P:cytoplasmic translation"/>
    <property type="evidence" value="ECO:0007669"/>
    <property type="project" value="TreeGrafter"/>
</dbReference>
<dbReference type="FunFam" id="2.30.30.30:FF:000001">
    <property type="entry name" value="50S ribosomal protein L2"/>
    <property type="match status" value="1"/>
</dbReference>
<dbReference type="FunFam" id="2.40.50.140:FF:000003">
    <property type="entry name" value="50S ribosomal protein L2"/>
    <property type="match status" value="1"/>
</dbReference>
<dbReference type="FunFam" id="4.10.950.10:FF:000001">
    <property type="entry name" value="50S ribosomal protein L2"/>
    <property type="match status" value="1"/>
</dbReference>
<dbReference type="Gene3D" id="2.30.30.30">
    <property type="match status" value="1"/>
</dbReference>
<dbReference type="Gene3D" id="2.40.50.140">
    <property type="entry name" value="Nucleic acid-binding proteins"/>
    <property type="match status" value="1"/>
</dbReference>
<dbReference type="Gene3D" id="4.10.950.10">
    <property type="entry name" value="Ribosomal protein L2, domain 3"/>
    <property type="match status" value="1"/>
</dbReference>
<dbReference type="HAMAP" id="MF_01320_B">
    <property type="entry name" value="Ribosomal_uL2_B"/>
    <property type="match status" value="1"/>
</dbReference>
<dbReference type="InterPro" id="IPR012340">
    <property type="entry name" value="NA-bd_OB-fold"/>
</dbReference>
<dbReference type="InterPro" id="IPR014722">
    <property type="entry name" value="Rib_uL2_dom2"/>
</dbReference>
<dbReference type="InterPro" id="IPR002171">
    <property type="entry name" value="Ribosomal_uL2"/>
</dbReference>
<dbReference type="InterPro" id="IPR005880">
    <property type="entry name" value="Ribosomal_uL2_bac/org-type"/>
</dbReference>
<dbReference type="InterPro" id="IPR022669">
    <property type="entry name" value="Ribosomal_uL2_C"/>
</dbReference>
<dbReference type="InterPro" id="IPR022671">
    <property type="entry name" value="Ribosomal_uL2_CS"/>
</dbReference>
<dbReference type="InterPro" id="IPR014726">
    <property type="entry name" value="Ribosomal_uL2_dom3"/>
</dbReference>
<dbReference type="InterPro" id="IPR022666">
    <property type="entry name" value="Ribosomal_uL2_RNA-bd_dom"/>
</dbReference>
<dbReference type="InterPro" id="IPR008991">
    <property type="entry name" value="Translation_prot_SH3-like_sf"/>
</dbReference>
<dbReference type="NCBIfam" id="TIGR01171">
    <property type="entry name" value="rplB_bact"/>
    <property type="match status" value="1"/>
</dbReference>
<dbReference type="PANTHER" id="PTHR13691:SF5">
    <property type="entry name" value="LARGE RIBOSOMAL SUBUNIT PROTEIN UL2M"/>
    <property type="match status" value="1"/>
</dbReference>
<dbReference type="PANTHER" id="PTHR13691">
    <property type="entry name" value="RIBOSOMAL PROTEIN L2"/>
    <property type="match status" value="1"/>
</dbReference>
<dbReference type="Pfam" id="PF00181">
    <property type="entry name" value="Ribosomal_L2"/>
    <property type="match status" value="1"/>
</dbReference>
<dbReference type="Pfam" id="PF03947">
    <property type="entry name" value="Ribosomal_L2_C"/>
    <property type="match status" value="1"/>
</dbReference>
<dbReference type="PIRSF" id="PIRSF002158">
    <property type="entry name" value="Ribosomal_L2"/>
    <property type="match status" value="1"/>
</dbReference>
<dbReference type="SMART" id="SM01383">
    <property type="entry name" value="Ribosomal_L2"/>
    <property type="match status" value="1"/>
</dbReference>
<dbReference type="SMART" id="SM01382">
    <property type="entry name" value="Ribosomal_L2_C"/>
    <property type="match status" value="1"/>
</dbReference>
<dbReference type="SUPFAM" id="SSF50249">
    <property type="entry name" value="Nucleic acid-binding proteins"/>
    <property type="match status" value="1"/>
</dbReference>
<dbReference type="SUPFAM" id="SSF50104">
    <property type="entry name" value="Translation proteins SH3-like domain"/>
    <property type="match status" value="1"/>
</dbReference>
<dbReference type="PROSITE" id="PS00467">
    <property type="entry name" value="RIBOSOMAL_L2"/>
    <property type="match status" value="1"/>
</dbReference>
<name>RL2_SALTO</name>
<feature type="chain" id="PRO_1000086350" description="Large ribosomal subunit protein uL2">
    <location>
        <begin position="1"/>
        <end position="279"/>
    </location>
</feature>
<feature type="region of interest" description="Disordered" evidence="2">
    <location>
        <begin position="32"/>
        <end position="58"/>
    </location>
</feature>
<feature type="region of interest" description="Disordered" evidence="2">
    <location>
        <begin position="223"/>
        <end position="279"/>
    </location>
</feature>
<feature type="compositionally biased region" description="Basic residues" evidence="2">
    <location>
        <begin position="40"/>
        <end position="58"/>
    </location>
</feature>
<feature type="compositionally biased region" description="Basic residues" evidence="2">
    <location>
        <begin position="269"/>
        <end position="279"/>
    </location>
</feature>
<comment type="function">
    <text evidence="1">One of the primary rRNA binding proteins. Required for association of the 30S and 50S subunits to form the 70S ribosome, for tRNA binding and peptide bond formation. It has been suggested to have peptidyltransferase activity; this is somewhat controversial. Makes several contacts with the 16S rRNA in the 70S ribosome.</text>
</comment>
<comment type="subunit">
    <text evidence="1">Part of the 50S ribosomal subunit. Forms a bridge to the 30S subunit in the 70S ribosome.</text>
</comment>
<comment type="similarity">
    <text evidence="1">Belongs to the universal ribosomal protein uL2 family.</text>
</comment>
<evidence type="ECO:0000255" key="1">
    <source>
        <dbReference type="HAMAP-Rule" id="MF_01320"/>
    </source>
</evidence>
<evidence type="ECO:0000256" key="2">
    <source>
        <dbReference type="SAM" id="MobiDB-lite"/>
    </source>
</evidence>
<evidence type="ECO:0000305" key="3"/>
<protein>
    <recommendedName>
        <fullName evidence="1">Large ribosomal subunit protein uL2</fullName>
    </recommendedName>
    <alternativeName>
        <fullName evidence="3">50S ribosomal protein L2</fullName>
    </alternativeName>
</protein>
<keyword id="KW-1185">Reference proteome</keyword>
<keyword id="KW-0687">Ribonucleoprotein</keyword>
<keyword id="KW-0689">Ribosomal protein</keyword>
<keyword id="KW-0694">RNA-binding</keyword>
<keyword id="KW-0699">rRNA-binding</keyword>
<gene>
    <name evidence="1" type="primary">rplB</name>
    <name type="ordered locus">Strop_3920</name>
</gene>
<organism>
    <name type="scientific">Salinispora tropica (strain ATCC BAA-916 / DSM 44818 / JCM 13857 / NBRC 105044 / CNB-440)</name>
    <dbReference type="NCBI Taxonomy" id="369723"/>
    <lineage>
        <taxon>Bacteria</taxon>
        <taxon>Bacillati</taxon>
        <taxon>Actinomycetota</taxon>
        <taxon>Actinomycetes</taxon>
        <taxon>Micromonosporales</taxon>
        <taxon>Micromonosporaceae</taxon>
        <taxon>Salinispora</taxon>
    </lineage>
</organism>
<sequence>MAIRKYKPTTPGRRGSSVADFAEITRSTPEKSLLTPLPKKGGRNAHGRITARHQGGGHKRQYRIIDFKRVDKDGVPAKVAHIEYDPNRTARIALLHFLDGEKRYILAPKDLKQGDIVESGPGADIKPGNNLPLRNIPVGMTIHNVELRPGGGAKLARSAGTGIQLLGREGAYATLRMPSGEIRRVDVRCRASIGEIGNADQSNINWGKAGRMRWKGKRPTVRGVAMNPVDHPHGGGEGKTSGGRHPVNPQGKPEGRTRRKGQPSDRLIVRRRYATRKRG</sequence>